<evidence type="ECO:0000255" key="1">
    <source>
        <dbReference type="HAMAP-Rule" id="MF_00147"/>
    </source>
</evidence>
<gene>
    <name evidence="1" type="primary">tpiA</name>
    <name type="ordered locus">CHU_3277</name>
</gene>
<reference key="1">
    <citation type="journal article" date="2007" name="Appl. Environ. Microbiol.">
        <title>Genome sequence of the cellulolytic gliding bacterium Cytophaga hutchinsonii.</title>
        <authorList>
            <person name="Xie G."/>
            <person name="Bruce D.C."/>
            <person name="Challacombe J.F."/>
            <person name="Chertkov O."/>
            <person name="Detter J.C."/>
            <person name="Gilna P."/>
            <person name="Han C.S."/>
            <person name="Lucas S."/>
            <person name="Misra M."/>
            <person name="Myers G.L."/>
            <person name="Richardson P."/>
            <person name="Tapia R."/>
            <person name="Thayer N."/>
            <person name="Thompson L.S."/>
            <person name="Brettin T.S."/>
            <person name="Henrissat B."/>
            <person name="Wilson D.B."/>
            <person name="McBride M.J."/>
        </authorList>
    </citation>
    <scope>NUCLEOTIDE SEQUENCE [LARGE SCALE GENOMIC DNA]</scope>
    <source>
        <strain>ATCC 33406 / DSM 1761 / JCM 20678 / CIP 103989 / IAM 12607 / NBRC 15051 / NCIMB 9469 / D465</strain>
    </source>
</reference>
<proteinExistence type="inferred from homology"/>
<feature type="chain" id="PRO_0000307455" description="Triosephosphate isomerase">
    <location>
        <begin position="1"/>
        <end position="251"/>
    </location>
</feature>
<feature type="active site" description="Electrophile" evidence="1">
    <location>
        <position position="96"/>
    </location>
</feature>
<feature type="active site" description="Proton acceptor" evidence="1">
    <location>
        <position position="168"/>
    </location>
</feature>
<feature type="binding site" evidence="1">
    <location>
        <begin position="9"/>
        <end position="11"/>
    </location>
    <ligand>
        <name>substrate</name>
    </ligand>
</feature>
<feature type="binding site" evidence="1">
    <location>
        <position position="174"/>
    </location>
    <ligand>
        <name>substrate</name>
    </ligand>
</feature>
<feature type="binding site" evidence="1">
    <location>
        <position position="214"/>
    </location>
    <ligand>
        <name>substrate</name>
    </ligand>
</feature>
<feature type="binding site" evidence="1">
    <location>
        <begin position="235"/>
        <end position="236"/>
    </location>
    <ligand>
        <name>substrate</name>
    </ligand>
</feature>
<protein>
    <recommendedName>
        <fullName evidence="1">Triosephosphate isomerase</fullName>
        <shortName evidence="1">TIM</shortName>
        <shortName evidence="1">TPI</shortName>
        <ecNumber evidence="1">5.3.1.1</ecNumber>
    </recommendedName>
    <alternativeName>
        <fullName evidence="1">Triose-phosphate isomerase</fullName>
    </alternativeName>
</protein>
<organism>
    <name type="scientific">Cytophaga hutchinsonii (strain ATCC 33406 / DSM 1761 / CIP 103989 / NBRC 15051 / NCIMB 9469 / D465)</name>
    <dbReference type="NCBI Taxonomy" id="269798"/>
    <lineage>
        <taxon>Bacteria</taxon>
        <taxon>Pseudomonadati</taxon>
        <taxon>Bacteroidota</taxon>
        <taxon>Cytophagia</taxon>
        <taxon>Cytophagales</taxon>
        <taxon>Cytophagaceae</taxon>
        <taxon>Cytophaga</taxon>
    </lineage>
</organism>
<sequence>MRKKVIAGNWKMNKTLEEGLSLASEVANMAKDEVPADVNLVMCIPYISLAAVSKVINDKVAIGAQNVYQKESGAFTGEISAPMLKSVGVKYVIIGHSERREYFGETNQQLADKVTISLANGLTPLFCCGETLAQREAGIHINFVNAQLTESLFHLSPEDFKKVVIAYEPIWAIGTGVTASDEQAQEMHAKIREHLASKYGAAVADEISILYGGSMKPDNAKGLLACKDIDGGLIGGASLKSRDFIDIAKSY</sequence>
<name>TPIS_CYTH3</name>
<dbReference type="EC" id="5.3.1.1" evidence="1"/>
<dbReference type="EMBL" id="CP000383">
    <property type="protein sequence ID" value="ABG60516.1"/>
    <property type="molecule type" value="Genomic_DNA"/>
</dbReference>
<dbReference type="RefSeq" id="WP_011586626.1">
    <property type="nucleotide sequence ID" value="NC_008255.1"/>
</dbReference>
<dbReference type="SMR" id="Q11PZ7"/>
<dbReference type="STRING" id="269798.CHU_3277"/>
<dbReference type="KEGG" id="chu:CHU_3277"/>
<dbReference type="eggNOG" id="COG0149">
    <property type="taxonomic scope" value="Bacteria"/>
</dbReference>
<dbReference type="HOGENOM" id="CLU_024251_2_3_10"/>
<dbReference type="OrthoDB" id="9809429at2"/>
<dbReference type="UniPathway" id="UPA00109">
    <property type="reaction ID" value="UER00189"/>
</dbReference>
<dbReference type="UniPathway" id="UPA00138"/>
<dbReference type="Proteomes" id="UP000001822">
    <property type="component" value="Chromosome"/>
</dbReference>
<dbReference type="GO" id="GO:0005829">
    <property type="term" value="C:cytosol"/>
    <property type="evidence" value="ECO:0007669"/>
    <property type="project" value="TreeGrafter"/>
</dbReference>
<dbReference type="GO" id="GO:0004807">
    <property type="term" value="F:triose-phosphate isomerase activity"/>
    <property type="evidence" value="ECO:0007669"/>
    <property type="project" value="UniProtKB-UniRule"/>
</dbReference>
<dbReference type="GO" id="GO:0006094">
    <property type="term" value="P:gluconeogenesis"/>
    <property type="evidence" value="ECO:0007669"/>
    <property type="project" value="UniProtKB-UniRule"/>
</dbReference>
<dbReference type="GO" id="GO:0046166">
    <property type="term" value="P:glyceraldehyde-3-phosphate biosynthetic process"/>
    <property type="evidence" value="ECO:0007669"/>
    <property type="project" value="TreeGrafter"/>
</dbReference>
<dbReference type="GO" id="GO:0019563">
    <property type="term" value="P:glycerol catabolic process"/>
    <property type="evidence" value="ECO:0007669"/>
    <property type="project" value="TreeGrafter"/>
</dbReference>
<dbReference type="GO" id="GO:0006096">
    <property type="term" value="P:glycolytic process"/>
    <property type="evidence" value="ECO:0007669"/>
    <property type="project" value="UniProtKB-UniRule"/>
</dbReference>
<dbReference type="CDD" id="cd00311">
    <property type="entry name" value="TIM"/>
    <property type="match status" value="1"/>
</dbReference>
<dbReference type="FunFam" id="3.20.20.70:FF:000016">
    <property type="entry name" value="Triosephosphate isomerase"/>
    <property type="match status" value="1"/>
</dbReference>
<dbReference type="Gene3D" id="3.20.20.70">
    <property type="entry name" value="Aldolase class I"/>
    <property type="match status" value="1"/>
</dbReference>
<dbReference type="HAMAP" id="MF_00147_B">
    <property type="entry name" value="TIM_B"/>
    <property type="match status" value="1"/>
</dbReference>
<dbReference type="InterPro" id="IPR013785">
    <property type="entry name" value="Aldolase_TIM"/>
</dbReference>
<dbReference type="InterPro" id="IPR035990">
    <property type="entry name" value="TIM_sf"/>
</dbReference>
<dbReference type="InterPro" id="IPR022896">
    <property type="entry name" value="TrioseP_Isoase_bac/euk"/>
</dbReference>
<dbReference type="InterPro" id="IPR000652">
    <property type="entry name" value="Triosephosphate_isomerase"/>
</dbReference>
<dbReference type="InterPro" id="IPR020861">
    <property type="entry name" value="Triosephosphate_isomerase_AS"/>
</dbReference>
<dbReference type="NCBIfam" id="TIGR00419">
    <property type="entry name" value="tim"/>
    <property type="match status" value="1"/>
</dbReference>
<dbReference type="PANTHER" id="PTHR21139">
    <property type="entry name" value="TRIOSEPHOSPHATE ISOMERASE"/>
    <property type="match status" value="1"/>
</dbReference>
<dbReference type="PANTHER" id="PTHR21139:SF42">
    <property type="entry name" value="TRIOSEPHOSPHATE ISOMERASE"/>
    <property type="match status" value="1"/>
</dbReference>
<dbReference type="Pfam" id="PF00121">
    <property type="entry name" value="TIM"/>
    <property type="match status" value="1"/>
</dbReference>
<dbReference type="SUPFAM" id="SSF51351">
    <property type="entry name" value="Triosephosphate isomerase (TIM)"/>
    <property type="match status" value="1"/>
</dbReference>
<dbReference type="PROSITE" id="PS00171">
    <property type="entry name" value="TIM_1"/>
    <property type="match status" value="1"/>
</dbReference>
<dbReference type="PROSITE" id="PS51440">
    <property type="entry name" value="TIM_2"/>
    <property type="match status" value="1"/>
</dbReference>
<keyword id="KW-0963">Cytoplasm</keyword>
<keyword id="KW-0312">Gluconeogenesis</keyword>
<keyword id="KW-0324">Glycolysis</keyword>
<keyword id="KW-0413">Isomerase</keyword>
<keyword id="KW-1185">Reference proteome</keyword>
<comment type="function">
    <text evidence="1">Involved in the gluconeogenesis. Catalyzes stereospecifically the conversion of dihydroxyacetone phosphate (DHAP) to D-glyceraldehyde-3-phosphate (G3P).</text>
</comment>
<comment type="catalytic activity">
    <reaction evidence="1">
        <text>D-glyceraldehyde 3-phosphate = dihydroxyacetone phosphate</text>
        <dbReference type="Rhea" id="RHEA:18585"/>
        <dbReference type="ChEBI" id="CHEBI:57642"/>
        <dbReference type="ChEBI" id="CHEBI:59776"/>
        <dbReference type="EC" id="5.3.1.1"/>
    </reaction>
</comment>
<comment type="pathway">
    <text evidence="1">Carbohydrate biosynthesis; gluconeogenesis.</text>
</comment>
<comment type="pathway">
    <text evidence="1">Carbohydrate degradation; glycolysis; D-glyceraldehyde 3-phosphate from glycerone phosphate: step 1/1.</text>
</comment>
<comment type="subunit">
    <text evidence="1">Homodimer.</text>
</comment>
<comment type="subcellular location">
    <subcellularLocation>
        <location evidence="1">Cytoplasm</location>
    </subcellularLocation>
</comment>
<comment type="similarity">
    <text evidence="1">Belongs to the triosephosphate isomerase family.</text>
</comment>
<accession>Q11PZ7</accession>